<comment type="function">
    <text evidence="1">Bidirectionally degrades single-stranded DNA into large acid-insoluble oligonucleotides, which are then degraded further into small acid-soluble oligonucleotides.</text>
</comment>
<comment type="catalytic activity">
    <reaction evidence="1">
        <text>Exonucleolytic cleavage in either 5'- to 3'- or 3'- to 5'-direction to yield nucleoside 5'-phosphates.</text>
        <dbReference type="EC" id="3.1.11.6"/>
    </reaction>
</comment>
<comment type="subunit">
    <text evidence="1">Heterooligomer composed of large and small subunits.</text>
</comment>
<comment type="subcellular location">
    <subcellularLocation>
        <location evidence="1">Cytoplasm</location>
    </subcellularLocation>
</comment>
<comment type="similarity">
    <text evidence="1">Belongs to the XseB family.</text>
</comment>
<gene>
    <name evidence="1" type="primary">xseB</name>
    <name type="ordered locus">OB1878</name>
</gene>
<name>EX7S_OCEIH</name>
<keyword id="KW-0963">Cytoplasm</keyword>
<keyword id="KW-0269">Exonuclease</keyword>
<keyword id="KW-0378">Hydrolase</keyword>
<keyword id="KW-0540">Nuclease</keyword>
<keyword id="KW-1185">Reference proteome</keyword>
<evidence type="ECO:0000255" key="1">
    <source>
        <dbReference type="HAMAP-Rule" id="MF_00337"/>
    </source>
</evidence>
<dbReference type="EC" id="3.1.11.6" evidence="1"/>
<dbReference type="EMBL" id="BA000028">
    <property type="protein sequence ID" value="BAC13834.1"/>
    <property type="molecule type" value="Genomic_DNA"/>
</dbReference>
<dbReference type="RefSeq" id="WP_011066275.1">
    <property type="nucleotide sequence ID" value="NC_004193.1"/>
</dbReference>
<dbReference type="SMR" id="Q8EQ45"/>
<dbReference type="STRING" id="221109.gene:10734118"/>
<dbReference type="KEGG" id="oih:OB1878"/>
<dbReference type="eggNOG" id="COG1722">
    <property type="taxonomic scope" value="Bacteria"/>
</dbReference>
<dbReference type="HOGENOM" id="CLU_145918_3_1_9"/>
<dbReference type="OrthoDB" id="9798666at2"/>
<dbReference type="PhylomeDB" id="Q8EQ45"/>
<dbReference type="Proteomes" id="UP000000822">
    <property type="component" value="Chromosome"/>
</dbReference>
<dbReference type="GO" id="GO:0005829">
    <property type="term" value="C:cytosol"/>
    <property type="evidence" value="ECO:0007669"/>
    <property type="project" value="TreeGrafter"/>
</dbReference>
<dbReference type="GO" id="GO:0009318">
    <property type="term" value="C:exodeoxyribonuclease VII complex"/>
    <property type="evidence" value="ECO:0007669"/>
    <property type="project" value="InterPro"/>
</dbReference>
<dbReference type="GO" id="GO:0008855">
    <property type="term" value="F:exodeoxyribonuclease VII activity"/>
    <property type="evidence" value="ECO:0007669"/>
    <property type="project" value="UniProtKB-UniRule"/>
</dbReference>
<dbReference type="GO" id="GO:0006308">
    <property type="term" value="P:DNA catabolic process"/>
    <property type="evidence" value="ECO:0007669"/>
    <property type="project" value="UniProtKB-UniRule"/>
</dbReference>
<dbReference type="Gene3D" id="1.10.287.1040">
    <property type="entry name" value="Exonuclease VII, small subunit"/>
    <property type="match status" value="1"/>
</dbReference>
<dbReference type="HAMAP" id="MF_00337">
    <property type="entry name" value="Exonuc_7_S"/>
    <property type="match status" value="1"/>
</dbReference>
<dbReference type="InterPro" id="IPR003761">
    <property type="entry name" value="Exonuc_VII_S"/>
</dbReference>
<dbReference type="InterPro" id="IPR037004">
    <property type="entry name" value="Exonuc_VII_ssu_sf"/>
</dbReference>
<dbReference type="NCBIfam" id="NF010666">
    <property type="entry name" value="PRK14063.1"/>
    <property type="match status" value="1"/>
</dbReference>
<dbReference type="NCBIfam" id="TIGR01280">
    <property type="entry name" value="xseB"/>
    <property type="match status" value="1"/>
</dbReference>
<dbReference type="PANTHER" id="PTHR34137">
    <property type="entry name" value="EXODEOXYRIBONUCLEASE 7 SMALL SUBUNIT"/>
    <property type="match status" value="1"/>
</dbReference>
<dbReference type="PANTHER" id="PTHR34137:SF1">
    <property type="entry name" value="EXODEOXYRIBONUCLEASE 7 SMALL SUBUNIT"/>
    <property type="match status" value="1"/>
</dbReference>
<dbReference type="Pfam" id="PF02609">
    <property type="entry name" value="Exonuc_VII_S"/>
    <property type="match status" value="1"/>
</dbReference>
<dbReference type="PIRSF" id="PIRSF006488">
    <property type="entry name" value="Exonuc_VII_S"/>
    <property type="match status" value="1"/>
</dbReference>
<dbReference type="SUPFAM" id="SSF116842">
    <property type="entry name" value="XseB-like"/>
    <property type="match status" value="1"/>
</dbReference>
<accession>Q8EQ45</accession>
<sequence length="78" mass="8912">MATKDLTFEQAMEKLEGIVSKLEEGDVPLEKAIEYYQEGMNLSKLCSEKLNHVQDKMVQIMNEQGELEPFDIQEDSSS</sequence>
<organism>
    <name type="scientific">Oceanobacillus iheyensis (strain DSM 14371 / CIP 107618 / JCM 11309 / KCTC 3954 / HTE831)</name>
    <dbReference type="NCBI Taxonomy" id="221109"/>
    <lineage>
        <taxon>Bacteria</taxon>
        <taxon>Bacillati</taxon>
        <taxon>Bacillota</taxon>
        <taxon>Bacilli</taxon>
        <taxon>Bacillales</taxon>
        <taxon>Bacillaceae</taxon>
        <taxon>Oceanobacillus</taxon>
    </lineage>
</organism>
<protein>
    <recommendedName>
        <fullName evidence="1">Exodeoxyribonuclease 7 small subunit</fullName>
        <ecNumber evidence="1">3.1.11.6</ecNumber>
    </recommendedName>
    <alternativeName>
        <fullName evidence="1">Exodeoxyribonuclease VII small subunit</fullName>
        <shortName evidence="1">Exonuclease VII small subunit</shortName>
    </alternativeName>
</protein>
<feature type="chain" id="PRO_0000206981" description="Exodeoxyribonuclease 7 small subunit">
    <location>
        <begin position="1"/>
        <end position="78"/>
    </location>
</feature>
<reference key="1">
    <citation type="journal article" date="2002" name="Nucleic Acids Res.">
        <title>Genome sequence of Oceanobacillus iheyensis isolated from the Iheya Ridge and its unexpected adaptive capabilities to extreme environments.</title>
        <authorList>
            <person name="Takami H."/>
            <person name="Takaki Y."/>
            <person name="Uchiyama I."/>
        </authorList>
    </citation>
    <scope>NUCLEOTIDE SEQUENCE [LARGE SCALE GENOMIC DNA]</scope>
    <source>
        <strain>DSM 14371 / CIP 107618 / JCM 11309 / KCTC 3954 / HTE831</strain>
    </source>
</reference>
<proteinExistence type="inferred from homology"/>